<protein>
    <recommendedName>
        <fullName evidence="3">Putative divalent cation/proton antiporter TMEM165</fullName>
    </recommendedName>
    <alternativeName>
        <fullName>Transmembrane protein 165</fullName>
    </alternativeName>
    <alternativeName>
        <fullName>Transmembrane protein TPARL</fullName>
    </alternativeName>
</protein>
<sequence>MAASARGSGRAPTRRLLVLLLLPLLWAPAGVRAGPEEDLSHRNQEPPAPAQQLQPQPAAVQGLEPARAEKGFTPAAPVHTNREDAATQANLGFIHAFVAAISVIIVSELGDKTFFIAAIMAMRYNRLTVLAGAMLALALMTCLSVLFGYATTVIPRVYTYYVSTALFAIFGIRMLREGLKMSPDEGQEELEEVQAELKKKDEEFQRTKLLNGPDVETGTSTAIPQKKWLHFISPIFVQALTLTFLAEWGDRSQLTTIVLAAREDPYGVAVGGTVGHCLCTGLAVIGGRMIAQKISVRTVTIIGGIVFLAFAFSALFISPESGF</sequence>
<organism>
    <name type="scientific">Rattus norvegicus</name>
    <name type="common">Rat</name>
    <dbReference type="NCBI Taxonomy" id="10116"/>
    <lineage>
        <taxon>Eukaryota</taxon>
        <taxon>Metazoa</taxon>
        <taxon>Chordata</taxon>
        <taxon>Craniata</taxon>
        <taxon>Vertebrata</taxon>
        <taxon>Euteleostomi</taxon>
        <taxon>Mammalia</taxon>
        <taxon>Eutheria</taxon>
        <taxon>Euarchontoglires</taxon>
        <taxon>Glires</taxon>
        <taxon>Rodentia</taxon>
        <taxon>Myomorpha</taxon>
        <taxon>Muroidea</taxon>
        <taxon>Muridae</taxon>
        <taxon>Murinae</taxon>
        <taxon>Rattus</taxon>
    </lineage>
</organism>
<accession>Q4V899</accession>
<feature type="signal peptide" evidence="4">
    <location>
        <begin position="1"/>
        <end position="33"/>
    </location>
</feature>
<feature type="chain" id="PRO_0000247335" description="Putative divalent cation/proton antiporter TMEM165">
    <location>
        <begin position="34"/>
        <end position="323"/>
    </location>
</feature>
<feature type="topological domain" description="Lumenal" evidence="4">
    <location>
        <begin position="34"/>
        <end position="88"/>
    </location>
</feature>
<feature type="transmembrane region" description="Helical" evidence="4">
    <location>
        <begin position="89"/>
        <end position="109"/>
    </location>
</feature>
<feature type="topological domain" description="Cytoplasmic" evidence="4">
    <location>
        <begin position="110"/>
        <end position="126"/>
    </location>
</feature>
<feature type="transmembrane region" description="Helical" evidence="4">
    <location>
        <begin position="127"/>
        <end position="147"/>
    </location>
</feature>
<feature type="topological domain" description="Lumenal" evidence="4">
    <location>
        <begin position="148"/>
        <end position="151"/>
    </location>
</feature>
<feature type="transmembrane region" description="Helical" evidence="4">
    <location>
        <begin position="152"/>
        <end position="172"/>
    </location>
</feature>
<feature type="topological domain" description="Cytoplasmic" evidence="4">
    <location>
        <begin position="173"/>
        <end position="227"/>
    </location>
</feature>
<feature type="transmembrane region" description="Helical" evidence="4">
    <location>
        <begin position="228"/>
        <end position="248"/>
    </location>
</feature>
<feature type="topological domain" description="Lumenal" evidence="4">
    <location>
        <begin position="249"/>
        <end position="266"/>
    </location>
</feature>
<feature type="transmembrane region" description="Helical" evidence="4">
    <location>
        <begin position="267"/>
        <end position="287"/>
    </location>
</feature>
<feature type="topological domain" description="Cytoplasmic" evidence="4">
    <location>
        <begin position="288"/>
        <end position="298"/>
    </location>
</feature>
<feature type="transmembrane region" description="Helical" evidence="4">
    <location>
        <begin position="299"/>
        <end position="319"/>
    </location>
</feature>
<feature type="topological domain" description="Lumenal" evidence="4">
    <location>
        <begin position="320"/>
        <end position="323"/>
    </location>
</feature>
<feature type="region of interest" description="Disordered" evidence="5">
    <location>
        <begin position="35"/>
        <end position="60"/>
    </location>
</feature>
<feature type="coiled-coil region" evidence="4">
    <location>
        <begin position="184"/>
        <end position="211"/>
    </location>
</feature>
<feature type="compositionally biased region" description="Basic and acidic residues" evidence="5">
    <location>
        <begin position="35"/>
        <end position="44"/>
    </location>
</feature>
<feature type="compositionally biased region" description="Low complexity" evidence="5">
    <location>
        <begin position="50"/>
        <end position="59"/>
    </location>
</feature>
<comment type="function">
    <text evidence="1 2 3">Putative divalent cation:proton antiporter that exchanges calcium or manganese ions for protons across the Golgi membrane. Mediates the reversible transport of calcium or manganese to the Golgi lumen driven by the proton gradient and possibly the membrane potential generated by V-ATPase. Provides calcium or manganese cofactors to resident Golgi enzymes and contributes to the maintenance of an acidic luminal Golgi pH required for proper functioning of the secretory pathway (By similarity). Promotes Ca(2+) storage within the Golgi lumen of the mammary epithelial cells to be then secreted into milk (By similarity). The transport mechanism and stoichiometry remains to be elucidated (By similarity).</text>
</comment>
<comment type="catalytic activity">
    <reaction evidence="3">
        <text>Ca(2+)(in) + n H(+)(out) = Ca(2+)(out) + n H(+)(in)</text>
        <dbReference type="Rhea" id="RHEA:76631"/>
        <dbReference type="ChEBI" id="CHEBI:15378"/>
        <dbReference type="ChEBI" id="CHEBI:29108"/>
    </reaction>
</comment>
<comment type="catalytic activity">
    <reaction evidence="3">
        <text>Mn(2+)(in) + n H(+)(out) = Mn(2+)(out) + n H(+)(in)</text>
        <dbReference type="Rhea" id="RHEA:76635"/>
        <dbReference type="ChEBI" id="CHEBI:15378"/>
        <dbReference type="ChEBI" id="CHEBI:29035"/>
    </reaction>
</comment>
<comment type="subcellular location">
    <subcellularLocation>
        <location evidence="2">Golgi apparatus membrane</location>
        <topology evidence="4">Multi-pass membrane protein</topology>
    </subcellularLocation>
</comment>
<comment type="similarity">
    <text evidence="6">Belongs to the GDT1 family.</text>
</comment>
<dbReference type="EMBL" id="BC097478">
    <property type="protein sequence ID" value="AAH97478.1"/>
    <property type="molecule type" value="mRNA"/>
</dbReference>
<dbReference type="RefSeq" id="NP_001019973.1">
    <property type="nucleotide sequence ID" value="NM_001024802.2"/>
</dbReference>
<dbReference type="FunCoup" id="Q4V899">
    <property type="interactions" value="3491"/>
</dbReference>
<dbReference type="STRING" id="10116.ENSRNOP00000003010"/>
<dbReference type="GlyGen" id="Q4V899">
    <property type="glycosylation" value="1 site"/>
</dbReference>
<dbReference type="PhosphoSitePlus" id="Q4V899"/>
<dbReference type="PaxDb" id="10116-ENSRNOP00000003010"/>
<dbReference type="Ensembl" id="ENSRNOT00000003010.7">
    <property type="protein sequence ID" value="ENSRNOP00000003010.3"/>
    <property type="gene ID" value="ENSRNOG00000002199.7"/>
</dbReference>
<dbReference type="GeneID" id="364137"/>
<dbReference type="KEGG" id="rno:364137"/>
<dbReference type="AGR" id="RGD:1306983"/>
<dbReference type="CTD" id="55858"/>
<dbReference type="RGD" id="1306983">
    <property type="gene designation" value="Tmem165"/>
</dbReference>
<dbReference type="eggNOG" id="KOG2881">
    <property type="taxonomic scope" value="Eukaryota"/>
</dbReference>
<dbReference type="GeneTree" id="ENSGT00390000005261"/>
<dbReference type="HOGENOM" id="CLU_040186_0_1_1"/>
<dbReference type="InParanoid" id="Q4V899"/>
<dbReference type="OMA" id="ILGHAIC"/>
<dbReference type="OrthoDB" id="442680at2759"/>
<dbReference type="PhylomeDB" id="Q4V899"/>
<dbReference type="TreeFam" id="TF105960"/>
<dbReference type="PRO" id="PR:Q4V899"/>
<dbReference type="Proteomes" id="UP000002494">
    <property type="component" value="Chromosome 14"/>
</dbReference>
<dbReference type="Bgee" id="ENSRNOG00000002199">
    <property type="expression patterns" value="Expressed in stomach and 20 other cell types or tissues"/>
</dbReference>
<dbReference type="GO" id="GO:0033106">
    <property type="term" value="C:cis-Golgi network membrane"/>
    <property type="evidence" value="ECO:0000250"/>
    <property type="project" value="UniProtKB"/>
</dbReference>
<dbReference type="GO" id="GO:0010008">
    <property type="term" value="C:endosome membrane"/>
    <property type="evidence" value="ECO:0000250"/>
    <property type="project" value="UniProtKB"/>
</dbReference>
<dbReference type="GO" id="GO:0005794">
    <property type="term" value="C:Golgi apparatus"/>
    <property type="evidence" value="ECO:0000250"/>
    <property type="project" value="UniProtKB"/>
</dbReference>
<dbReference type="GO" id="GO:0000139">
    <property type="term" value="C:Golgi membrane"/>
    <property type="evidence" value="ECO:0007669"/>
    <property type="project" value="UniProtKB-SubCell"/>
</dbReference>
<dbReference type="GO" id="GO:0005765">
    <property type="term" value="C:lysosomal membrane"/>
    <property type="evidence" value="ECO:0000250"/>
    <property type="project" value="UniProtKB"/>
</dbReference>
<dbReference type="GO" id="GO:0032588">
    <property type="term" value="C:trans-Golgi network membrane"/>
    <property type="evidence" value="ECO:0000250"/>
    <property type="project" value="UniProtKB"/>
</dbReference>
<dbReference type="GO" id="GO:0015297">
    <property type="term" value="F:antiporter activity"/>
    <property type="evidence" value="ECO:0007669"/>
    <property type="project" value="UniProtKB-KW"/>
</dbReference>
<dbReference type="GO" id="GO:0015085">
    <property type="term" value="F:calcium ion transmembrane transporter activity"/>
    <property type="evidence" value="ECO:0000318"/>
    <property type="project" value="GO_Central"/>
</dbReference>
<dbReference type="GO" id="GO:0005384">
    <property type="term" value="F:manganese ion transmembrane transporter activity"/>
    <property type="evidence" value="ECO:0000318"/>
    <property type="project" value="GO_Central"/>
</dbReference>
<dbReference type="GO" id="GO:0070588">
    <property type="term" value="P:calcium ion transmembrane transport"/>
    <property type="evidence" value="ECO:0000318"/>
    <property type="project" value="GO_Central"/>
</dbReference>
<dbReference type="GO" id="GO:0006816">
    <property type="term" value="P:calcium ion transport"/>
    <property type="evidence" value="ECO:0000250"/>
    <property type="project" value="UniProtKB"/>
</dbReference>
<dbReference type="GO" id="GO:0032468">
    <property type="term" value="P:Golgi calcium ion homeostasis"/>
    <property type="evidence" value="ECO:0000318"/>
    <property type="project" value="GO_Central"/>
</dbReference>
<dbReference type="GO" id="GO:0032472">
    <property type="term" value="P:Golgi calcium ion transport"/>
    <property type="evidence" value="ECO:0000250"/>
    <property type="project" value="UniProtKB"/>
</dbReference>
<dbReference type="GO" id="GO:0006874">
    <property type="term" value="P:intracellular calcium ion homeostasis"/>
    <property type="evidence" value="ECO:0000250"/>
    <property type="project" value="UniProtKB"/>
</dbReference>
<dbReference type="GO" id="GO:0071421">
    <property type="term" value="P:manganese ion transmembrane transport"/>
    <property type="evidence" value="ECO:0000318"/>
    <property type="project" value="GO_Central"/>
</dbReference>
<dbReference type="GO" id="GO:0006828">
    <property type="term" value="P:manganese ion transport"/>
    <property type="evidence" value="ECO:0000250"/>
    <property type="project" value="UniProtKB"/>
</dbReference>
<dbReference type="GO" id="GO:0006487">
    <property type="term" value="P:protein N-linked glycosylation"/>
    <property type="evidence" value="ECO:0000250"/>
    <property type="project" value="UniProtKB"/>
</dbReference>
<dbReference type="GO" id="GO:0035751">
    <property type="term" value="P:regulation of lysosomal lumen pH"/>
    <property type="evidence" value="ECO:0000250"/>
    <property type="project" value="UniProtKB"/>
</dbReference>
<dbReference type="InterPro" id="IPR001727">
    <property type="entry name" value="GDT1-like"/>
</dbReference>
<dbReference type="InterPro" id="IPR049555">
    <property type="entry name" value="GDT1-like_CS"/>
</dbReference>
<dbReference type="PANTHER" id="PTHR12608:SF1">
    <property type="entry name" value="TRANSMEMBRANE PROTEIN 165"/>
    <property type="match status" value="1"/>
</dbReference>
<dbReference type="PANTHER" id="PTHR12608">
    <property type="entry name" value="TRANSMEMBRANE PROTEIN HTP-1 RELATED"/>
    <property type="match status" value="1"/>
</dbReference>
<dbReference type="Pfam" id="PF01169">
    <property type="entry name" value="GDT1"/>
    <property type="match status" value="2"/>
</dbReference>
<dbReference type="PROSITE" id="PS01214">
    <property type="entry name" value="UPF0016"/>
    <property type="match status" value="1"/>
</dbReference>
<reference key="1">
    <citation type="journal article" date="2004" name="Genome Res.">
        <title>The status, quality, and expansion of the NIH full-length cDNA project: the Mammalian Gene Collection (MGC).</title>
        <authorList>
            <consortium name="The MGC Project Team"/>
        </authorList>
    </citation>
    <scope>NUCLEOTIDE SEQUENCE [LARGE SCALE MRNA]</scope>
    <source>
        <tissue>Placenta</tissue>
    </source>
</reference>
<proteinExistence type="evidence at transcript level"/>
<keyword id="KW-0050">Antiport</keyword>
<keyword id="KW-0175">Coiled coil</keyword>
<keyword id="KW-0333">Golgi apparatus</keyword>
<keyword id="KW-0472">Membrane</keyword>
<keyword id="KW-1185">Reference proteome</keyword>
<keyword id="KW-0732">Signal</keyword>
<keyword id="KW-0812">Transmembrane</keyword>
<keyword id="KW-1133">Transmembrane helix</keyword>
<keyword id="KW-0813">Transport</keyword>
<name>TM165_RAT</name>
<gene>
    <name evidence="3 7" type="primary">Tmem165</name>
    <name type="synonym">Tparl</name>
</gene>
<evidence type="ECO:0000250" key="1">
    <source>
        <dbReference type="UniProtKB" id="P38301"/>
    </source>
</evidence>
<evidence type="ECO:0000250" key="2">
    <source>
        <dbReference type="UniProtKB" id="P52875"/>
    </source>
</evidence>
<evidence type="ECO:0000250" key="3">
    <source>
        <dbReference type="UniProtKB" id="Q9HC07"/>
    </source>
</evidence>
<evidence type="ECO:0000255" key="4"/>
<evidence type="ECO:0000256" key="5">
    <source>
        <dbReference type="SAM" id="MobiDB-lite"/>
    </source>
</evidence>
<evidence type="ECO:0000305" key="6"/>
<evidence type="ECO:0000312" key="7">
    <source>
        <dbReference type="RGD" id="1306983"/>
    </source>
</evidence>